<keyword id="KW-1003">Cell membrane</keyword>
<keyword id="KW-0961">Cell wall biogenesis/degradation</keyword>
<keyword id="KW-0328">Glycosyltransferase</keyword>
<keyword id="KW-0472">Membrane</keyword>
<keyword id="KW-0808">Transferase</keyword>
<keyword id="KW-0812">Transmembrane</keyword>
<keyword id="KW-1133">Transmembrane helix</keyword>
<gene>
    <name evidence="7" type="primary">FKS1</name>
    <name type="ORF">CNAG_06508</name>
</gene>
<sequence>MSYPNPPPPPKGSASFSSSSSDPFNQTNQLPYDSQFPPQHAFAHPSAPNPGAGGAGVAPPGQGGQYAPYYDNEPEMGGRWEGGGMGRETWASESGWSQNEPNYPPSDYHGGPGYLPSRASTPTFEGSNAGHRPRDPYPAWTVDANIPLSKEEIEDVLIDLANKFGFQKDSSRNVYDFLMIQLDSRASRMSPNQALLTLHADYIGGEHANYRKWYFAAQLDLDDAIGAVQNPGLNRVRSVARRGGKTKNPLATAQEKSLESATSRWRTAMNNMSQYDRLRQVALYLLCWGEAAQVRFMPECLCFIFKCADDYYRSPECQNRQEAVPEGLYLRAVIKPLYRFLRDQGYEVVDGKFLRRERDHDKVIGYDDVNQLFWYPEGISRITLNDNTRLVDIPPAQRFMKFDRIDWNKVFFKTYLEKRSFFHLLVNFNRIWVLHISVFWFFTAYNAPSIYAPSGSTTATTPMAWSMTGLGGFVATLIMIAATLAEFSYIPTTWNNTSHLTRRLIFLLIILAITGGPSIYIAFFNQTGHVALILGIVQFFCSVVATIAFATLPSGRMFGDRVAGKSRKYLANQTFTASYPALGFYPRVASFLLWFLVFGCKFTESYFFLTLSFRDPMKVMNGMKVQNCHDKYFGNGLCTNQPAFALAVMFVMDLTLFFLDTFLWYVIWNTVFSIARSFAIGMSIWTPWKDIFARLPKRIYAKILATDDMEVKYKPKVLVSQVWNAVIISMYREHLLSIEHVQKLLYHQIQSDQPGKRTLRAPAFFISQSEKGSKAEFFPKGSEAERRICFFAQSLTTSIPAPIPVDAMPTFTVLVPHYSEKILLSLREIIREEDQNTRVTLLEYLKQLHPVEWDNFVRDTKILAEESDAFNGGNPFASDEKEEAKKADDIPFYTIGFKSAAPEYTLRTRIWASLRAQTLYRTVSGFMNYSKAIKLLYRVENPEVVQLFGGNTDQLERELERMARRKFKFVVSMQRYSKFNKEEHENAEFLLRAYPDLQIAYLDEEPPRKDGGESRIFSALIDGHSEIMPNGRRRPKFRIELPGNPILGDGKSDNQNHAIVFYRGEYLQLIDANQDNYLEECLKIRNVLGEFEEFKVSTQSPYAAQGHADFAKFPVAILGAREYIFSENIGILGDIAAGKEQTFGTLAARSLSYIGGKLHYGHPDFLNAIYMNTRGGVSKAQKGLHLNEDIFAGMLAFGRGGRIKHSEYYQCGKGRDLGFGTILNFQTKIGTGMGEQMLSREYYYLGTQLPIDRFLTFYYGHPGFHINNILVMMSVQVFMLALVFLGTLNKQLTVCRYSSGGDILPGQSGCYNLVPVFKWIKRCIISIFIVFWIAFVPLFVQELTERGTGRAILRLCKHFLSLSPVFEVFSTQIYMHSILNDLTFGGARYIATGRGFATTRISFSILYSRFAGPSIYLGMRTLVLLLFITLTVWVPHLIYFWITVVGLCVAPFLFNPHQFAIADFIIDYREFLRWMSRGNSRTHANSWVGYCRLSRTRVTGFKRKRLGLPSEKLSSDVPRAPWKAILIGEIIGPICLAILFVICYLFIKSFAVDGQIQPGLVRIAIIALGPIVWNMALLITLFLISVFLGPCLNSYTHQFGATMAALAHFGAVAGMLVFFELLWFLELWNTSHAVLGIIAVISVQRCIFKFLIAVFLSREFKHDETNRAWWTGVWFNRGLGSHALSQPAREFVVKTIEMGLYSADFIACHLLLALLTIPMFIPYFDRVHATMLFWLAPNQQIRPPIYSFRQRSQRRKIVFKYGLLYLIIQGIFIALIVVPIIFKDVAGLTPKSVPFNGII</sequence>
<name>FKS1_CRYNH</name>
<proteinExistence type="evidence at protein level"/>
<comment type="function">
    <text evidence="1 4">Catalytic subunit of the 1,3-beta-glucan synthase (GS) complex (PubMed:15980360). Synthesizes 1,3-beta-glucan, a major structural component of the yeast cell wall (PubMed:15980360). Involved in cell wall synthesis, maintenance and remodeling (By similarity).</text>
</comment>
<comment type="catalytic activity">
    <reaction evidence="4">
        <text>[(1-&gt;3)-beta-D-glucosyl](n) + UDP-alpha-D-glucose = [(1-&gt;3)-beta-D-glucosyl](n+1) + UDP + H(+)</text>
        <dbReference type="Rhea" id="RHEA:21476"/>
        <dbReference type="Rhea" id="RHEA-COMP:11146"/>
        <dbReference type="Rhea" id="RHEA-COMP:14303"/>
        <dbReference type="ChEBI" id="CHEBI:15378"/>
        <dbReference type="ChEBI" id="CHEBI:37671"/>
        <dbReference type="ChEBI" id="CHEBI:58223"/>
        <dbReference type="ChEBI" id="CHEBI:58885"/>
        <dbReference type="EC" id="2.4.1.34"/>
    </reaction>
</comment>
<comment type="activity regulation">
    <text evidence="4">Activated by magnesium ions (PubMed:15980360). Inhibited by caspofungin and cilofungin (PubMed:15980360).</text>
</comment>
<comment type="biophysicochemical properties">
    <kinetics>
        <KM evidence="4">0.21 mM for UDP-glucose (at pH 7.75)</KM>
    </kinetics>
    <phDependence>
        <text evidence="4">Optimum pH is 7.75.</text>
    </phDependence>
</comment>
<comment type="subunit">
    <text evidence="1">Component of the 1,3-beta-glucan synthase (GS) complex composed of a catalytic subunit FKS1 and a regulatory subunit RHO1.</text>
</comment>
<comment type="subcellular location">
    <subcellularLocation>
        <location evidence="1">Cell membrane</location>
        <topology evidence="2">Multi-pass membrane protein</topology>
    </subcellularLocation>
</comment>
<comment type="disruption phenotype">
    <text evidence="5 6">Essential for viability (PubMed:9882657). Knockdown of the enzyme increases sensitivity to caspofungin, activates the cell wall integrity pathway, and decreases virulence in the host lung (PubMed:35506343).</text>
</comment>
<comment type="similarity">
    <text evidence="8">Belongs to the glycosyltransferase 48 family.</text>
</comment>
<comment type="sequence caution" evidence="8">
    <conflict type="frameshift">
        <sequence resource="EMBL-CDS" id="AAD11794"/>
    </conflict>
</comment>
<evidence type="ECO:0000250" key="1">
    <source>
        <dbReference type="UniProtKB" id="P38631"/>
    </source>
</evidence>
<evidence type="ECO:0000255" key="2"/>
<evidence type="ECO:0000256" key="3">
    <source>
        <dbReference type="SAM" id="MobiDB-lite"/>
    </source>
</evidence>
<evidence type="ECO:0000269" key="4">
    <source>
    </source>
</evidence>
<evidence type="ECO:0000269" key="5">
    <source>
    </source>
</evidence>
<evidence type="ECO:0000269" key="6">
    <source>
    </source>
</evidence>
<evidence type="ECO:0000303" key="7">
    <source>
    </source>
</evidence>
<evidence type="ECO:0000305" key="8"/>
<accession>O93927</accession>
<accession>J9VWV0</accession>
<dbReference type="EC" id="2.4.1.34" evidence="4"/>
<dbReference type="EMBL" id="AF102882">
    <property type="protein sequence ID" value="AAD11794.1"/>
    <property type="status" value="ALT_FRAME"/>
    <property type="molecule type" value="Genomic_DNA"/>
</dbReference>
<dbReference type="EMBL" id="CP003832">
    <property type="protein sequence ID" value="AFR98738.1"/>
    <property type="molecule type" value="Genomic_DNA"/>
</dbReference>
<dbReference type="RefSeq" id="XP_012053533.1">
    <property type="nucleotide sequence ID" value="XM_012198143.1"/>
</dbReference>
<dbReference type="SMR" id="O93927"/>
<dbReference type="CAZy" id="GT48">
    <property type="family name" value="Glycosyltransferase Family 48"/>
</dbReference>
<dbReference type="SwissPalm" id="O93927"/>
<dbReference type="GeneID" id="23889702"/>
<dbReference type="KEGG" id="cng:CNAG_06508"/>
<dbReference type="VEuPathDB" id="FungiDB:CNAG_06508"/>
<dbReference type="HOGENOM" id="CLU_000844_0_1_1"/>
<dbReference type="OrthoDB" id="2507at5206"/>
<dbReference type="Proteomes" id="UP000010091">
    <property type="component" value="Chromosome 13"/>
</dbReference>
<dbReference type="GO" id="GO:0000148">
    <property type="term" value="C:1,3-beta-D-glucan synthase complex"/>
    <property type="evidence" value="ECO:0007669"/>
    <property type="project" value="InterPro"/>
</dbReference>
<dbReference type="GO" id="GO:0097038">
    <property type="term" value="C:perinuclear endoplasmic reticulum"/>
    <property type="evidence" value="ECO:0000314"/>
    <property type="project" value="UniProtKB"/>
</dbReference>
<dbReference type="GO" id="GO:0005886">
    <property type="term" value="C:plasma membrane"/>
    <property type="evidence" value="ECO:0000314"/>
    <property type="project" value="UniProtKB"/>
</dbReference>
<dbReference type="GO" id="GO:0003843">
    <property type="term" value="F:1,3-beta-D-glucan synthase activity"/>
    <property type="evidence" value="ECO:0007669"/>
    <property type="project" value="UniProtKB-EC"/>
</dbReference>
<dbReference type="GO" id="GO:0047657">
    <property type="term" value="F:alpha-1,3-glucan synthase activity"/>
    <property type="evidence" value="ECO:0000314"/>
    <property type="project" value="UniProtKB"/>
</dbReference>
<dbReference type="GO" id="GO:0006075">
    <property type="term" value="P:(1-&gt;3)-beta-D-glucan biosynthetic process"/>
    <property type="evidence" value="ECO:0007669"/>
    <property type="project" value="InterPro"/>
</dbReference>
<dbReference type="GO" id="GO:0042546">
    <property type="term" value="P:cell wall biogenesis"/>
    <property type="evidence" value="ECO:0000314"/>
    <property type="project" value="UniProtKB"/>
</dbReference>
<dbReference type="GO" id="GO:0071555">
    <property type="term" value="P:cell wall organization"/>
    <property type="evidence" value="ECO:0007669"/>
    <property type="project" value="UniProtKB-KW"/>
</dbReference>
<dbReference type="GO" id="GO:0051278">
    <property type="term" value="P:fungal-type cell wall polysaccharide biosynthetic process"/>
    <property type="evidence" value="ECO:0007669"/>
    <property type="project" value="TreeGrafter"/>
</dbReference>
<dbReference type="InterPro" id="IPR026899">
    <property type="entry name" value="FKS1-like_dom1"/>
</dbReference>
<dbReference type="InterPro" id="IPR056261">
    <property type="entry name" value="FKS1-like_dom2"/>
</dbReference>
<dbReference type="InterPro" id="IPR003440">
    <property type="entry name" value="Glyco_trans_48_dom"/>
</dbReference>
<dbReference type="PANTHER" id="PTHR12741:SF48">
    <property type="entry name" value="1,3-BETA-GLUCAN SYNTHASE COMPONENT FKS1-RELATED"/>
    <property type="match status" value="1"/>
</dbReference>
<dbReference type="PANTHER" id="PTHR12741">
    <property type="entry name" value="LYST-INTERACTING PROTEIN LIP5 DOPAMINE RESPONSIVE PROTEIN DRG-1"/>
    <property type="match status" value="1"/>
</dbReference>
<dbReference type="Pfam" id="PF14288">
    <property type="entry name" value="FKS1_dom1"/>
    <property type="match status" value="1"/>
</dbReference>
<dbReference type="Pfam" id="PF23605">
    <property type="entry name" value="FKS1_dom2"/>
    <property type="match status" value="1"/>
</dbReference>
<dbReference type="Pfam" id="PF02364">
    <property type="entry name" value="Glucan_synthase"/>
    <property type="match status" value="1"/>
</dbReference>
<dbReference type="SMART" id="SM01205">
    <property type="entry name" value="FKS1_dom1"/>
    <property type="match status" value="1"/>
</dbReference>
<reference key="1">
    <citation type="journal article" date="1999" name="J. Bacteriol.">
        <title>A glucan synthase FKS1 homolog in cryptococcus neoformans is single copy and encodes an essential function.</title>
        <authorList>
            <person name="Thompson J.R."/>
            <person name="Douglas C.M."/>
            <person name="Li W."/>
            <person name="Jue C.K."/>
            <person name="Pramanik B."/>
            <person name="Yuan X."/>
            <person name="Rude T.H."/>
            <person name="Toffaletti D.L."/>
            <person name="Perfect J.R."/>
            <person name="Kurtz M."/>
        </authorList>
    </citation>
    <scope>NUCLEOTIDE SEQUENCE [GENOMIC DNA]</scope>
    <scope>DISRUPTION PHENOTYPE</scope>
    <source>
        <strain>H99 / ATCC 208821 / CBS 10515 / FGSC 9487</strain>
    </source>
</reference>
<reference key="2">
    <citation type="journal article" date="2014" name="PLoS Genet.">
        <title>Analysis of the genome and transcriptome of Cryptococcus neoformans var. grubii reveals complex RNA expression and microevolution leading to virulence attenuation.</title>
        <authorList>
            <person name="Janbon G."/>
            <person name="Ormerod K.L."/>
            <person name="Paulet D."/>
            <person name="Byrnes E.J. III"/>
            <person name="Yadav V."/>
            <person name="Chatterjee G."/>
            <person name="Mullapudi N."/>
            <person name="Hon C.-C."/>
            <person name="Billmyre R.B."/>
            <person name="Brunel F."/>
            <person name="Bahn Y.-S."/>
            <person name="Chen W."/>
            <person name="Chen Y."/>
            <person name="Chow E.W.L."/>
            <person name="Coppee J.-Y."/>
            <person name="Floyd-Averette A."/>
            <person name="Gaillardin C."/>
            <person name="Gerik K.J."/>
            <person name="Goldberg J."/>
            <person name="Gonzalez-Hilarion S."/>
            <person name="Gujja S."/>
            <person name="Hamlin J.L."/>
            <person name="Hsueh Y.-P."/>
            <person name="Ianiri G."/>
            <person name="Jones S."/>
            <person name="Kodira C.D."/>
            <person name="Kozubowski L."/>
            <person name="Lam W."/>
            <person name="Marra M."/>
            <person name="Mesner L.D."/>
            <person name="Mieczkowski P.A."/>
            <person name="Moyrand F."/>
            <person name="Nielsen K."/>
            <person name="Proux C."/>
            <person name="Rossignol T."/>
            <person name="Schein J.E."/>
            <person name="Sun S."/>
            <person name="Wollschlaeger C."/>
            <person name="Wood I.A."/>
            <person name="Zeng Q."/>
            <person name="Neuveglise C."/>
            <person name="Newlon C.S."/>
            <person name="Perfect J.R."/>
            <person name="Lodge J.K."/>
            <person name="Idnurm A."/>
            <person name="Stajich J.E."/>
            <person name="Kronstad J.W."/>
            <person name="Sanyal K."/>
            <person name="Heitman J."/>
            <person name="Fraser J.A."/>
            <person name="Cuomo C.A."/>
            <person name="Dietrich F.S."/>
        </authorList>
    </citation>
    <scope>NUCLEOTIDE SEQUENCE [LARGE SCALE GENOMIC DNA]</scope>
    <source>
        <strain>H99 / ATCC 208821 / CBS 10515 / FGSC 9487</strain>
    </source>
</reference>
<reference key="3">
    <citation type="journal article" date="2005" name="Antimicrob. Agents Chemother.">
        <title>Cryptococcus neoformans resistance to echinocandins: (1,3)beta-glucan synthase activity is sensitive to echinocandins.</title>
        <authorList>
            <person name="Maligie M.A."/>
            <person name="Selitrennikoff C.P."/>
        </authorList>
    </citation>
    <scope>FUNCTION</scope>
    <scope>CATALYTIC ACTIVITY</scope>
    <scope>ACTIVITY REGULATION</scope>
    <scope>BIOPHYSICOCHEMICAL PROPERTIES</scope>
</reference>
<reference key="4">
    <citation type="journal article" date="2022" name="MSphere">
        <title>FKS1 Is Required for Cryptococcus neoformans Fitness In Vivo: Application of Copper-Regulated Gene Expression to Mouse Models of Cryptococcosis.</title>
        <authorList>
            <person name="Beattie S.R."/>
            <person name="Jezewski A.J."/>
            <person name="Ristow L.C."/>
            <person name="Wellington M."/>
            <person name="Krysan D.J."/>
        </authorList>
    </citation>
    <scope>DISRUPTION PHENOTYPE</scope>
</reference>
<protein>
    <recommendedName>
        <fullName evidence="7">1,3-beta-glucan synthase component FKS1</fullName>
        <ecNumber evidence="4">2.4.1.34</ecNumber>
    </recommendedName>
</protein>
<feature type="chain" id="PRO_0000394217" description="1,3-beta-glucan synthase component FKS1">
    <location>
        <begin position="1"/>
        <end position="1799"/>
    </location>
</feature>
<feature type="transmembrane region" description="Helical" evidence="2">
    <location>
        <begin position="431"/>
        <end position="451"/>
    </location>
</feature>
<feature type="transmembrane region" description="Helical" evidence="2">
    <location>
        <begin position="470"/>
        <end position="490"/>
    </location>
</feature>
<feature type="transmembrane region" description="Helical" evidence="2">
    <location>
        <begin position="504"/>
        <end position="524"/>
    </location>
</feature>
<feature type="transmembrane region" description="Helical" evidence="2">
    <location>
        <begin position="530"/>
        <end position="550"/>
    </location>
</feature>
<feature type="transmembrane region" description="Helical" evidence="2">
    <location>
        <begin position="591"/>
        <end position="611"/>
    </location>
</feature>
<feature type="transmembrane region" description="Helical" evidence="2">
    <location>
        <begin position="648"/>
        <end position="668"/>
    </location>
</feature>
<feature type="transmembrane region" description="Helical" evidence="2">
    <location>
        <begin position="1268"/>
        <end position="1288"/>
    </location>
</feature>
<feature type="transmembrane region" description="Helical" evidence="2">
    <location>
        <begin position="1323"/>
        <end position="1343"/>
    </location>
</feature>
<feature type="transmembrane region" description="Helical" evidence="2">
    <location>
        <begin position="1422"/>
        <end position="1442"/>
    </location>
</feature>
<feature type="transmembrane region" description="Helical" evidence="2">
    <location>
        <begin position="1446"/>
        <end position="1466"/>
    </location>
</feature>
<feature type="transmembrane region" description="Helical" evidence="2">
    <location>
        <begin position="1527"/>
        <end position="1547"/>
    </location>
</feature>
<feature type="transmembrane region" description="Helical" evidence="2">
    <location>
        <begin position="1563"/>
        <end position="1583"/>
    </location>
</feature>
<feature type="transmembrane region" description="Helical" evidence="2">
    <location>
        <begin position="1605"/>
        <end position="1625"/>
    </location>
</feature>
<feature type="transmembrane region" description="Helical" evidence="2">
    <location>
        <begin position="1635"/>
        <end position="1655"/>
    </location>
</feature>
<feature type="transmembrane region" description="Helical" evidence="2">
    <location>
        <begin position="1704"/>
        <end position="1724"/>
    </location>
</feature>
<feature type="transmembrane region" description="Helical" evidence="2">
    <location>
        <begin position="1762"/>
        <end position="1782"/>
    </location>
</feature>
<feature type="region of interest" description="Disordered" evidence="3">
    <location>
        <begin position="1"/>
        <end position="136"/>
    </location>
</feature>
<feature type="compositionally biased region" description="Pro residues" evidence="3">
    <location>
        <begin position="1"/>
        <end position="11"/>
    </location>
</feature>
<feature type="compositionally biased region" description="Low complexity" evidence="3">
    <location>
        <begin position="12"/>
        <end position="23"/>
    </location>
</feature>
<feature type="compositionally biased region" description="Gly residues" evidence="3">
    <location>
        <begin position="51"/>
        <end position="64"/>
    </location>
</feature>
<feature type="compositionally biased region" description="Polar residues" evidence="3">
    <location>
        <begin position="91"/>
        <end position="101"/>
    </location>
</feature>
<feature type="sequence conflict" description="In Ref. 1; AAD11794." evidence="8" ref="1">
    <original>I</original>
    <variation>M</variation>
    <location>
        <position position="1333"/>
    </location>
</feature>
<organism>
    <name type="scientific">Cryptococcus neoformans var. grubii serotype A (strain H99 / ATCC 208821 / CBS 10515 / FGSC 9487)</name>
    <name type="common">Filobasidiella neoformans var. grubii</name>
    <dbReference type="NCBI Taxonomy" id="235443"/>
    <lineage>
        <taxon>Eukaryota</taxon>
        <taxon>Fungi</taxon>
        <taxon>Dikarya</taxon>
        <taxon>Basidiomycota</taxon>
        <taxon>Agaricomycotina</taxon>
        <taxon>Tremellomycetes</taxon>
        <taxon>Tremellales</taxon>
        <taxon>Cryptococcaceae</taxon>
        <taxon>Cryptococcus</taxon>
        <taxon>Cryptococcus neoformans species complex</taxon>
    </lineage>
</organism>